<name>PTH_MYCAP</name>
<gene>
    <name evidence="1" type="primary">pth</name>
    <name type="ordered locus">MAG7470</name>
</gene>
<comment type="function">
    <text evidence="1">Hydrolyzes ribosome-free peptidyl-tRNAs (with 1 or more amino acids incorporated), which drop off the ribosome during protein synthesis, or as a result of ribosome stalling.</text>
</comment>
<comment type="function">
    <text evidence="1">Catalyzes the release of premature peptidyl moieties from peptidyl-tRNA molecules trapped in stalled 50S ribosomal subunits, and thus maintains levels of free tRNAs and 50S ribosomes.</text>
</comment>
<comment type="catalytic activity">
    <reaction evidence="1">
        <text>an N-acyl-L-alpha-aminoacyl-tRNA + H2O = an N-acyl-L-amino acid + a tRNA + H(+)</text>
        <dbReference type="Rhea" id="RHEA:54448"/>
        <dbReference type="Rhea" id="RHEA-COMP:10123"/>
        <dbReference type="Rhea" id="RHEA-COMP:13883"/>
        <dbReference type="ChEBI" id="CHEBI:15377"/>
        <dbReference type="ChEBI" id="CHEBI:15378"/>
        <dbReference type="ChEBI" id="CHEBI:59874"/>
        <dbReference type="ChEBI" id="CHEBI:78442"/>
        <dbReference type="ChEBI" id="CHEBI:138191"/>
        <dbReference type="EC" id="3.1.1.29"/>
    </reaction>
</comment>
<comment type="subunit">
    <text evidence="1">Monomer.</text>
</comment>
<comment type="subcellular location">
    <subcellularLocation>
        <location evidence="1">Cytoplasm</location>
    </subcellularLocation>
</comment>
<comment type="similarity">
    <text evidence="1">Belongs to the PTH family.</text>
</comment>
<sequence length="188" mass="20884">MKLIVGLGNPGNEYRFTRHNAGFLAIDKICEKLNISLNKEKFNGEFAVSDGFILAKPLTYMNKSGDFVYSIASFYKINPSDIIVIYDDLSFSIGQAAIKIGGSSAGHKGIERLMSKFSSNDFKRIRVGIGVNSGTTIKDYVLSLFTKDEMIVVEEVLEKVADAAISLVYNDVNFVMNKFNTDNKKRVI</sequence>
<organism>
    <name type="scientific">Mycoplasmopsis agalactiae (strain NCTC 10123 / CIP 59.7 / PG2)</name>
    <name type="common">Mycoplasma agalactiae</name>
    <dbReference type="NCBI Taxonomy" id="347257"/>
    <lineage>
        <taxon>Bacteria</taxon>
        <taxon>Bacillati</taxon>
        <taxon>Mycoplasmatota</taxon>
        <taxon>Mycoplasmoidales</taxon>
        <taxon>Metamycoplasmataceae</taxon>
        <taxon>Mycoplasmopsis</taxon>
    </lineage>
</organism>
<evidence type="ECO:0000255" key="1">
    <source>
        <dbReference type="HAMAP-Rule" id="MF_00083"/>
    </source>
</evidence>
<accession>A5IZI8</accession>
<dbReference type="EC" id="3.1.1.29" evidence="1"/>
<dbReference type="EMBL" id="CU179680">
    <property type="protein sequence ID" value="CAL59447.1"/>
    <property type="molecule type" value="Genomic_DNA"/>
</dbReference>
<dbReference type="RefSeq" id="WP_011949899.1">
    <property type="nucleotide sequence ID" value="NC_009497.1"/>
</dbReference>
<dbReference type="SMR" id="A5IZI8"/>
<dbReference type="STRING" id="347257.MAG7470"/>
<dbReference type="GeneID" id="93358475"/>
<dbReference type="KEGG" id="maa:MAG7470"/>
<dbReference type="HOGENOM" id="CLU_062456_4_1_14"/>
<dbReference type="Proteomes" id="UP000007065">
    <property type="component" value="Chromosome"/>
</dbReference>
<dbReference type="GO" id="GO:0005737">
    <property type="term" value="C:cytoplasm"/>
    <property type="evidence" value="ECO:0007669"/>
    <property type="project" value="UniProtKB-SubCell"/>
</dbReference>
<dbReference type="GO" id="GO:0004045">
    <property type="term" value="F:peptidyl-tRNA hydrolase activity"/>
    <property type="evidence" value="ECO:0007669"/>
    <property type="project" value="UniProtKB-UniRule"/>
</dbReference>
<dbReference type="GO" id="GO:0000049">
    <property type="term" value="F:tRNA binding"/>
    <property type="evidence" value="ECO:0007669"/>
    <property type="project" value="UniProtKB-UniRule"/>
</dbReference>
<dbReference type="GO" id="GO:0006515">
    <property type="term" value="P:protein quality control for misfolded or incompletely synthesized proteins"/>
    <property type="evidence" value="ECO:0007669"/>
    <property type="project" value="UniProtKB-UniRule"/>
</dbReference>
<dbReference type="GO" id="GO:0072344">
    <property type="term" value="P:rescue of stalled ribosome"/>
    <property type="evidence" value="ECO:0007669"/>
    <property type="project" value="UniProtKB-UniRule"/>
</dbReference>
<dbReference type="CDD" id="cd00462">
    <property type="entry name" value="PTH"/>
    <property type="match status" value="1"/>
</dbReference>
<dbReference type="FunFam" id="3.40.50.1470:FF:000001">
    <property type="entry name" value="Peptidyl-tRNA hydrolase"/>
    <property type="match status" value="1"/>
</dbReference>
<dbReference type="Gene3D" id="3.40.50.1470">
    <property type="entry name" value="Peptidyl-tRNA hydrolase"/>
    <property type="match status" value="1"/>
</dbReference>
<dbReference type="HAMAP" id="MF_00083">
    <property type="entry name" value="Pept_tRNA_hydro_bact"/>
    <property type="match status" value="1"/>
</dbReference>
<dbReference type="InterPro" id="IPR001328">
    <property type="entry name" value="Pept_tRNA_hydro"/>
</dbReference>
<dbReference type="InterPro" id="IPR018171">
    <property type="entry name" value="Pept_tRNA_hydro_CS"/>
</dbReference>
<dbReference type="InterPro" id="IPR036416">
    <property type="entry name" value="Pept_tRNA_hydro_sf"/>
</dbReference>
<dbReference type="NCBIfam" id="TIGR00447">
    <property type="entry name" value="pth"/>
    <property type="match status" value="1"/>
</dbReference>
<dbReference type="PANTHER" id="PTHR17224">
    <property type="entry name" value="PEPTIDYL-TRNA HYDROLASE"/>
    <property type="match status" value="1"/>
</dbReference>
<dbReference type="PANTHER" id="PTHR17224:SF1">
    <property type="entry name" value="PEPTIDYL-TRNA HYDROLASE"/>
    <property type="match status" value="1"/>
</dbReference>
<dbReference type="Pfam" id="PF01195">
    <property type="entry name" value="Pept_tRNA_hydro"/>
    <property type="match status" value="1"/>
</dbReference>
<dbReference type="SUPFAM" id="SSF53178">
    <property type="entry name" value="Peptidyl-tRNA hydrolase-like"/>
    <property type="match status" value="1"/>
</dbReference>
<dbReference type="PROSITE" id="PS01195">
    <property type="entry name" value="PEPT_TRNA_HYDROL_1"/>
    <property type="match status" value="1"/>
</dbReference>
<reference key="1">
    <citation type="journal article" date="2007" name="PLoS Genet.">
        <title>Being pathogenic, plastic, and sexual while living with a nearly minimal bacterial genome.</title>
        <authorList>
            <person name="Sirand-Pugnet P."/>
            <person name="Lartigue C."/>
            <person name="Marenda M."/>
            <person name="Jacob D."/>
            <person name="Barre A."/>
            <person name="Barbe V."/>
            <person name="Schenowitz C."/>
            <person name="Mangenot S."/>
            <person name="Couloux A."/>
            <person name="Segurens B."/>
            <person name="de Daruvar A."/>
            <person name="Blanchard A."/>
            <person name="Citti C."/>
        </authorList>
    </citation>
    <scope>NUCLEOTIDE SEQUENCE [LARGE SCALE GENOMIC DNA]</scope>
    <source>
        <strain>NCTC 10123 / CIP 59.7 / PG2</strain>
    </source>
</reference>
<feature type="chain" id="PRO_1000092960" description="Peptidyl-tRNA hydrolase">
    <location>
        <begin position="1"/>
        <end position="188"/>
    </location>
</feature>
<feature type="active site" description="Proton acceptor" evidence="1">
    <location>
        <position position="19"/>
    </location>
</feature>
<feature type="binding site" evidence="1">
    <location>
        <position position="14"/>
    </location>
    <ligand>
        <name>tRNA</name>
        <dbReference type="ChEBI" id="CHEBI:17843"/>
    </ligand>
</feature>
<feature type="binding site" evidence="1">
    <location>
        <position position="60"/>
    </location>
    <ligand>
        <name>tRNA</name>
        <dbReference type="ChEBI" id="CHEBI:17843"/>
    </ligand>
</feature>
<feature type="binding site" evidence="1">
    <location>
        <position position="62"/>
    </location>
    <ligand>
        <name>tRNA</name>
        <dbReference type="ChEBI" id="CHEBI:17843"/>
    </ligand>
</feature>
<feature type="site" description="Discriminates between blocked and unblocked aminoacyl-tRNA" evidence="1">
    <location>
        <position position="9"/>
    </location>
</feature>
<feature type="site" description="Stabilizes the basic form of H active site to accept a proton" evidence="1">
    <location>
        <position position="87"/>
    </location>
</feature>
<keyword id="KW-0963">Cytoplasm</keyword>
<keyword id="KW-0378">Hydrolase</keyword>
<keyword id="KW-1185">Reference proteome</keyword>
<keyword id="KW-0694">RNA-binding</keyword>
<keyword id="KW-0820">tRNA-binding</keyword>
<protein>
    <recommendedName>
        <fullName evidence="1">Peptidyl-tRNA hydrolase</fullName>
        <shortName evidence="1">Pth</shortName>
        <ecNumber evidence="1">3.1.1.29</ecNumber>
    </recommendedName>
</protein>
<proteinExistence type="inferred from homology"/>